<accession>Q48MV4</accession>
<sequence>MKASLLNKLDVLSDRFEELTALLGDAEVISDQTRFRAYSREYAEVEPVVALYQQLIRVQGDLEGAQALLKDSDPDMREMAVEEVRETKQQLVELEAQLQRMLLPKDPNDGRNVFLEIRAGTGGDEAAIFSGDLFRMYSRYAERRGWRVEILSENEGEHGGYKEVIARVEGDSVYGKLKFESGAHRVQRVPETESQGRIHTSACTVAVLPEPDEQQAIEINPADLRVDTYRSSGAGGQHVNKTDSAIRITHLPSGIVVECQEERSQHKNRARAMSWLSAKLNDQQTSAAANAIASERKLLVGSGDRSERIRTYNFPQGRVTDHRVNLTLYSLDEVLAGGVDAVIEPLLAEYQADQLAALGE</sequence>
<comment type="function">
    <text evidence="1">Peptide chain release factor 1 directs the termination of translation in response to the peptide chain termination codons UAG and UAA.</text>
</comment>
<comment type="subcellular location">
    <subcellularLocation>
        <location evidence="1">Cytoplasm</location>
    </subcellularLocation>
</comment>
<comment type="PTM">
    <text evidence="1">Methylated by PrmC. Methylation increases the termination efficiency of RF1.</text>
</comment>
<comment type="similarity">
    <text evidence="1">Belongs to the prokaryotic/mitochondrial release factor family.</text>
</comment>
<evidence type="ECO:0000255" key="1">
    <source>
        <dbReference type="HAMAP-Rule" id="MF_00093"/>
    </source>
</evidence>
<dbReference type="EMBL" id="CP000058">
    <property type="protein sequence ID" value="AAZ36444.1"/>
    <property type="molecule type" value="Genomic_DNA"/>
</dbReference>
<dbReference type="RefSeq" id="WP_002552150.1">
    <property type="nucleotide sequence ID" value="NC_005773.3"/>
</dbReference>
<dbReference type="SMR" id="Q48MV4"/>
<dbReference type="GeneID" id="61868361"/>
<dbReference type="KEGG" id="psp:PSPPH_0997"/>
<dbReference type="eggNOG" id="COG0216">
    <property type="taxonomic scope" value="Bacteria"/>
</dbReference>
<dbReference type="HOGENOM" id="CLU_036856_0_1_6"/>
<dbReference type="Proteomes" id="UP000000551">
    <property type="component" value="Chromosome"/>
</dbReference>
<dbReference type="GO" id="GO:0005737">
    <property type="term" value="C:cytoplasm"/>
    <property type="evidence" value="ECO:0007669"/>
    <property type="project" value="UniProtKB-SubCell"/>
</dbReference>
<dbReference type="GO" id="GO:0016149">
    <property type="term" value="F:translation release factor activity, codon specific"/>
    <property type="evidence" value="ECO:0007669"/>
    <property type="project" value="UniProtKB-UniRule"/>
</dbReference>
<dbReference type="FunFam" id="3.30.160.20:FF:000004">
    <property type="entry name" value="Peptide chain release factor 1"/>
    <property type="match status" value="1"/>
</dbReference>
<dbReference type="FunFam" id="3.30.70.1660:FF:000002">
    <property type="entry name" value="Peptide chain release factor 1"/>
    <property type="match status" value="1"/>
</dbReference>
<dbReference type="FunFam" id="3.30.70.1660:FF:000004">
    <property type="entry name" value="Peptide chain release factor 1"/>
    <property type="match status" value="1"/>
</dbReference>
<dbReference type="Gene3D" id="3.30.160.20">
    <property type="match status" value="1"/>
</dbReference>
<dbReference type="Gene3D" id="3.30.70.1660">
    <property type="match status" value="1"/>
</dbReference>
<dbReference type="Gene3D" id="6.10.140.1950">
    <property type="match status" value="1"/>
</dbReference>
<dbReference type="HAMAP" id="MF_00093">
    <property type="entry name" value="Rel_fac_1"/>
    <property type="match status" value="1"/>
</dbReference>
<dbReference type="InterPro" id="IPR005139">
    <property type="entry name" value="PCRF"/>
</dbReference>
<dbReference type="InterPro" id="IPR000352">
    <property type="entry name" value="Pep_chain_release_fac_I"/>
</dbReference>
<dbReference type="InterPro" id="IPR045853">
    <property type="entry name" value="Pep_chain_release_fac_I_sf"/>
</dbReference>
<dbReference type="InterPro" id="IPR050057">
    <property type="entry name" value="Prokaryotic/Mito_RF"/>
</dbReference>
<dbReference type="InterPro" id="IPR004373">
    <property type="entry name" value="RF-1"/>
</dbReference>
<dbReference type="NCBIfam" id="TIGR00019">
    <property type="entry name" value="prfA"/>
    <property type="match status" value="1"/>
</dbReference>
<dbReference type="NCBIfam" id="NF001859">
    <property type="entry name" value="PRK00591.1"/>
    <property type="match status" value="1"/>
</dbReference>
<dbReference type="PANTHER" id="PTHR43804">
    <property type="entry name" value="LD18447P"/>
    <property type="match status" value="1"/>
</dbReference>
<dbReference type="PANTHER" id="PTHR43804:SF7">
    <property type="entry name" value="LD18447P"/>
    <property type="match status" value="1"/>
</dbReference>
<dbReference type="Pfam" id="PF03462">
    <property type="entry name" value="PCRF"/>
    <property type="match status" value="1"/>
</dbReference>
<dbReference type="Pfam" id="PF00472">
    <property type="entry name" value="RF-1"/>
    <property type="match status" value="1"/>
</dbReference>
<dbReference type="SMART" id="SM00937">
    <property type="entry name" value="PCRF"/>
    <property type="match status" value="1"/>
</dbReference>
<dbReference type="SUPFAM" id="SSF75620">
    <property type="entry name" value="Release factor"/>
    <property type="match status" value="1"/>
</dbReference>
<dbReference type="PROSITE" id="PS00745">
    <property type="entry name" value="RF_PROK_I"/>
    <property type="match status" value="1"/>
</dbReference>
<gene>
    <name evidence="1" type="primary">prfA</name>
    <name type="ordered locus">PSPPH_0997</name>
</gene>
<protein>
    <recommendedName>
        <fullName evidence="1">Peptide chain release factor 1</fullName>
        <shortName evidence="1">RF-1</shortName>
    </recommendedName>
</protein>
<organism>
    <name type="scientific">Pseudomonas savastanoi pv. phaseolicola (strain 1448A / Race 6)</name>
    <name type="common">Pseudomonas syringae pv. phaseolicola (strain 1448A / Race 6)</name>
    <dbReference type="NCBI Taxonomy" id="264730"/>
    <lineage>
        <taxon>Bacteria</taxon>
        <taxon>Pseudomonadati</taxon>
        <taxon>Pseudomonadota</taxon>
        <taxon>Gammaproteobacteria</taxon>
        <taxon>Pseudomonadales</taxon>
        <taxon>Pseudomonadaceae</taxon>
        <taxon>Pseudomonas</taxon>
    </lineage>
</organism>
<reference key="1">
    <citation type="journal article" date="2005" name="J. Bacteriol.">
        <title>Whole-genome sequence analysis of Pseudomonas syringae pv. phaseolicola 1448A reveals divergence among pathovars in genes involved in virulence and transposition.</title>
        <authorList>
            <person name="Joardar V."/>
            <person name="Lindeberg M."/>
            <person name="Jackson R.W."/>
            <person name="Selengut J."/>
            <person name="Dodson R."/>
            <person name="Brinkac L.M."/>
            <person name="Daugherty S.C."/>
            <person name="DeBoy R.T."/>
            <person name="Durkin A.S."/>
            <person name="Gwinn Giglio M."/>
            <person name="Madupu R."/>
            <person name="Nelson W.C."/>
            <person name="Rosovitz M.J."/>
            <person name="Sullivan S.A."/>
            <person name="Crabtree J."/>
            <person name="Creasy T."/>
            <person name="Davidsen T.M."/>
            <person name="Haft D.H."/>
            <person name="Zafar N."/>
            <person name="Zhou L."/>
            <person name="Halpin R."/>
            <person name="Holley T."/>
            <person name="Khouri H.M."/>
            <person name="Feldblyum T.V."/>
            <person name="White O."/>
            <person name="Fraser C.M."/>
            <person name="Chatterjee A.K."/>
            <person name="Cartinhour S."/>
            <person name="Schneider D."/>
            <person name="Mansfield J.W."/>
            <person name="Collmer A."/>
            <person name="Buell R."/>
        </authorList>
    </citation>
    <scope>NUCLEOTIDE SEQUENCE [LARGE SCALE GENOMIC DNA]</scope>
    <source>
        <strain>1448A / Race 6</strain>
    </source>
</reference>
<proteinExistence type="inferred from homology"/>
<feature type="chain" id="PRO_0000263323" description="Peptide chain release factor 1">
    <location>
        <begin position="1"/>
        <end position="360"/>
    </location>
</feature>
<feature type="modified residue" description="N5-methylglutamine" evidence="1">
    <location>
        <position position="237"/>
    </location>
</feature>
<name>RF1_PSE14</name>
<keyword id="KW-0963">Cytoplasm</keyword>
<keyword id="KW-0488">Methylation</keyword>
<keyword id="KW-0648">Protein biosynthesis</keyword>